<feature type="chain" id="PRO_0000264169" description="Transcriptional repressor NrdR">
    <location>
        <begin position="1"/>
        <end position="149"/>
    </location>
</feature>
<feature type="domain" description="ATP-cone" evidence="1">
    <location>
        <begin position="49"/>
        <end position="139"/>
    </location>
</feature>
<feature type="zinc finger region" evidence="1">
    <location>
        <begin position="3"/>
        <end position="34"/>
    </location>
</feature>
<accession>Q0TPJ5</accession>
<gene>
    <name evidence="1" type="primary">nrdR</name>
    <name type="ordered locus">CPF_2012</name>
</gene>
<comment type="function">
    <text evidence="1">Negatively regulates transcription of bacterial ribonucleotide reductase nrd genes and operons by binding to NrdR-boxes.</text>
</comment>
<comment type="cofactor">
    <cofactor evidence="1">
        <name>Zn(2+)</name>
        <dbReference type="ChEBI" id="CHEBI:29105"/>
    </cofactor>
    <text evidence="1">Binds 1 zinc ion.</text>
</comment>
<comment type="similarity">
    <text evidence="1">Belongs to the NrdR family.</text>
</comment>
<keyword id="KW-0067">ATP-binding</keyword>
<keyword id="KW-0238">DNA-binding</keyword>
<keyword id="KW-0479">Metal-binding</keyword>
<keyword id="KW-0547">Nucleotide-binding</keyword>
<keyword id="KW-0678">Repressor</keyword>
<keyword id="KW-0804">Transcription</keyword>
<keyword id="KW-0805">Transcription regulation</keyword>
<keyword id="KW-0862">Zinc</keyword>
<keyword id="KW-0863">Zinc-finger</keyword>
<name>NRDR_CLOP1</name>
<organism>
    <name type="scientific">Clostridium perfringens (strain ATCC 13124 / DSM 756 / JCM 1290 / NCIMB 6125 / NCTC 8237 / Type A)</name>
    <dbReference type="NCBI Taxonomy" id="195103"/>
    <lineage>
        <taxon>Bacteria</taxon>
        <taxon>Bacillati</taxon>
        <taxon>Bacillota</taxon>
        <taxon>Clostridia</taxon>
        <taxon>Eubacteriales</taxon>
        <taxon>Clostridiaceae</taxon>
        <taxon>Clostridium</taxon>
    </lineage>
</organism>
<dbReference type="EMBL" id="CP000246">
    <property type="protein sequence ID" value="ABG83319.1"/>
    <property type="molecule type" value="Genomic_DNA"/>
</dbReference>
<dbReference type="RefSeq" id="WP_003449440.1">
    <property type="nucleotide sequence ID" value="NC_008261.1"/>
</dbReference>
<dbReference type="SMR" id="Q0TPJ5"/>
<dbReference type="STRING" id="195103.CPF_2012"/>
<dbReference type="PaxDb" id="195103-CPF_2012"/>
<dbReference type="GeneID" id="93001704"/>
<dbReference type="KEGG" id="cpf:CPF_2012"/>
<dbReference type="eggNOG" id="COG1327">
    <property type="taxonomic scope" value="Bacteria"/>
</dbReference>
<dbReference type="HOGENOM" id="CLU_108412_0_0_9"/>
<dbReference type="Proteomes" id="UP000001823">
    <property type="component" value="Chromosome"/>
</dbReference>
<dbReference type="GO" id="GO:0005524">
    <property type="term" value="F:ATP binding"/>
    <property type="evidence" value="ECO:0007669"/>
    <property type="project" value="UniProtKB-KW"/>
</dbReference>
<dbReference type="GO" id="GO:0003677">
    <property type="term" value="F:DNA binding"/>
    <property type="evidence" value="ECO:0007669"/>
    <property type="project" value="UniProtKB-KW"/>
</dbReference>
<dbReference type="GO" id="GO:0008270">
    <property type="term" value="F:zinc ion binding"/>
    <property type="evidence" value="ECO:0007669"/>
    <property type="project" value="UniProtKB-UniRule"/>
</dbReference>
<dbReference type="GO" id="GO:0045892">
    <property type="term" value="P:negative regulation of DNA-templated transcription"/>
    <property type="evidence" value="ECO:0007669"/>
    <property type="project" value="UniProtKB-UniRule"/>
</dbReference>
<dbReference type="HAMAP" id="MF_00440">
    <property type="entry name" value="NrdR"/>
    <property type="match status" value="1"/>
</dbReference>
<dbReference type="InterPro" id="IPR005144">
    <property type="entry name" value="ATP-cone_dom"/>
</dbReference>
<dbReference type="InterPro" id="IPR055173">
    <property type="entry name" value="NrdR-like_N"/>
</dbReference>
<dbReference type="InterPro" id="IPR003796">
    <property type="entry name" value="RNR_NrdR-like"/>
</dbReference>
<dbReference type="NCBIfam" id="TIGR00244">
    <property type="entry name" value="transcriptional regulator NrdR"/>
    <property type="match status" value="1"/>
</dbReference>
<dbReference type="PANTHER" id="PTHR30455">
    <property type="entry name" value="TRANSCRIPTIONAL REPRESSOR NRDR"/>
    <property type="match status" value="1"/>
</dbReference>
<dbReference type="PANTHER" id="PTHR30455:SF2">
    <property type="entry name" value="TRANSCRIPTIONAL REPRESSOR NRDR"/>
    <property type="match status" value="1"/>
</dbReference>
<dbReference type="Pfam" id="PF03477">
    <property type="entry name" value="ATP-cone"/>
    <property type="match status" value="1"/>
</dbReference>
<dbReference type="Pfam" id="PF22811">
    <property type="entry name" value="Zn_ribbon_NrdR"/>
    <property type="match status" value="1"/>
</dbReference>
<dbReference type="PROSITE" id="PS51161">
    <property type="entry name" value="ATP_CONE"/>
    <property type="match status" value="1"/>
</dbReference>
<evidence type="ECO:0000255" key="1">
    <source>
        <dbReference type="HAMAP-Rule" id="MF_00440"/>
    </source>
</evidence>
<reference key="1">
    <citation type="journal article" date="2006" name="Genome Res.">
        <title>Skewed genomic variability in strains of the toxigenic bacterial pathogen, Clostridium perfringens.</title>
        <authorList>
            <person name="Myers G.S.A."/>
            <person name="Rasko D.A."/>
            <person name="Cheung J.K."/>
            <person name="Ravel J."/>
            <person name="Seshadri R."/>
            <person name="DeBoy R.T."/>
            <person name="Ren Q."/>
            <person name="Varga J."/>
            <person name="Awad M.M."/>
            <person name="Brinkac L.M."/>
            <person name="Daugherty S.C."/>
            <person name="Haft D.H."/>
            <person name="Dodson R.J."/>
            <person name="Madupu R."/>
            <person name="Nelson W.C."/>
            <person name="Rosovitz M.J."/>
            <person name="Sullivan S.A."/>
            <person name="Khouri H."/>
            <person name="Dimitrov G.I."/>
            <person name="Watkins K.L."/>
            <person name="Mulligan S."/>
            <person name="Benton J."/>
            <person name="Radune D."/>
            <person name="Fisher D.J."/>
            <person name="Atkins H.S."/>
            <person name="Hiscox T."/>
            <person name="Jost B.H."/>
            <person name="Billington S.J."/>
            <person name="Songer J.G."/>
            <person name="McClane B.A."/>
            <person name="Titball R.W."/>
            <person name="Rood J.I."/>
            <person name="Melville S.B."/>
            <person name="Paulsen I.T."/>
        </authorList>
    </citation>
    <scope>NUCLEOTIDE SEQUENCE [LARGE SCALE GENOMIC DNA]</scope>
    <source>
        <strain>ATCC 13124 / DSM 756 / JCM 1290 / NCIMB 6125 / NCTC 8237 / S 107 / Type A</strain>
    </source>
</reference>
<proteinExistence type="inferred from homology"/>
<protein>
    <recommendedName>
        <fullName evidence="1">Transcriptional repressor NrdR</fullName>
    </recommendedName>
</protein>
<sequence>MRCPYCSYEESKVVDSRSAEDYNAIRRRRECLRCSKRYTTYEKVEDIPILVIKKDLSRESFNKEKIISGLIKACQKRPVSRAQIEEIAADIERNISNKMMVEIKSDYIGEMIMERLKDIDEVSYVRFASVYRQFKDINTFMEEIKSLMK</sequence>